<protein>
    <recommendedName>
        <fullName evidence="4">Acetyltransferase PA3944</fullName>
        <ecNumber>2.3.1.-</ecNumber>
    </recommendedName>
    <alternativeName>
        <fullName evidence="4">GCN5-related N-acetyltransferase</fullName>
        <shortName evidence="4">GNAT</shortName>
    </alternativeName>
</protein>
<comment type="function">
    <text evidence="3">Catalyzes the transfer of an acetyl group from acetyl coenzyme A (AcCoA) to an acceptor substrate and releases both CoA and the acetylated product. It prefers the peptide Asp-Phe methyl ester (or aspartame) and the peptide antibiotics polymyxin B and colistin. Other substrates like dopamine, serotonin, puromycin, chloramphenicol, D-glucosamine, glycine and N-alpha-acetyl-L-glutamine are used and displayed lower activity.</text>
</comment>
<evidence type="ECO:0000250" key="1">
    <source>
        <dbReference type="UniProtKB" id="Q9I0Q8"/>
    </source>
</evidence>
<evidence type="ECO:0000255" key="2">
    <source>
        <dbReference type="PROSITE-ProRule" id="PRU00532"/>
    </source>
</evidence>
<evidence type="ECO:0000269" key="3">
    <source>
    </source>
</evidence>
<evidence type="ECO:0000303" key="4">
    <source>
    </source>
</evidence>
<evidence type="ECO:0007829" key="5">
    <source>
        <dbReference type="PDB" id="6EDV"/>
    </source>
</evidence>
<evidence type="ECO:0007829" key="6">
    <source>
        <dbReference type="PDB" id="7KPP"/>
    </source>
</evidence>
<evidence type="ECO:0007829" key="7">
    <source>
        <dbReference type="PDB" id="7KPS"/>
    </source>
</evidence>
<keyword id="KW-0002">3D-structure</keyword>
<keyword id="KW-0012">Acyltransferase</keyword>
<keyword id="KW-1185">Reference proteome</keyword>
<keyword id="KW-0808">Transferase</keyword>
<name>ATSE3_PSEAE</name>
<proteinExistence type="evidence at protein level"/>
<organism>
    <name type="scientific">Pseudomonas aeruginosa (strain ATCC 15692 / DSM 22644 / CIP 104116 / JCM 14847 / LMG 12228 / 1C / PRS 101 / PAO1)</name>
    <dbReference type="NCBI Taxonomy" id="208964"/>
    <lineage>
        <taxon>Bacteria</taxon>
        <taxon>Pseudomonadati</taxon>
        <taxon>Pseudomonadota</taxon>
        <taxon>Gammaproteobacteria</taxon>
        <taxon>Pseudomonadales</taxon>
        <taxon>Pseudomonadaceae</taxon>
        <taxon>Pseudomonas</taxon>
    </lineage>
</organism>
<reference key="1">
    <citation type="journal article" date="2000" name="Nature">
        <title>Complete genome sequence of Pseudomonas aeruginosa PAO1, an opportunistic pathogen.</title>
        <authorList>
            <person name="Stover C.K."/>
            <person name="Pham X.-Q.T."/>
            <person name="Erwin A.L."/>
            <person name="Mizoguchi S.D."/>
            <person name="Warrener P."/>
            <person name="Hickey M.J."/>
            <person name="Brinkman F.S.L."/>
            <person name="Hufnagle W.O."/>
            <person name="Kowalik D.J."/>
            <person name="Lagrou M."/>
            <person name="Garber R.L."/>
            <person name="Goltry L."/>
            <person name="Tolentino E."/>
            <person name="Westbrock-Wadman S."/>
            <person name="Yuan Y."/>
            <person name="Brody L.L."/>
            <person name="Coulter S.N."/>
            <person name="Folger K.R."/>
            <person name="Kas A."/>
            <person name="Larbig K."/>
            <person name="Lim R.M."/>
            <person name="Smith K.A."/>
            <person name="Spencer D.H."/>
            <person name="Wong G.K.-S."/>
            <person name="Wu Z."/>
            <person name="Paulsen I.T."/>
            <person name="Reizer J."/>
            <person name="Saier M.H. Jr."/>
            <person name="Hancock R.E.W."/>
            <person name="Lory S."/>
            <person name="Olson M.V."/>
        </authorList>
    </citation>
    <scope>NUCLEOTIDE SEQUENCE [LARGE SCALE GENOMIC DNA]</scope>
    <source>
        <strain>ATCC 15692 / DSM 22644 / CIP 104116 / JCM 14847 / LMG 12228 / 1C / PRS 101 / PAO1</strain>
    </source>
</reference>
<reference key="2">
    <citation type="journal article" date="2013" name="Protein Sci.">
        <title>Broad-substrate screen as a tool to identify substrates for bacterial Gcn5-related N-acetyltransferases with unknown substrate specificity.</title>
        <authorList>
            <person name="Kuhn M.L."/>
            <person name="Majorek K.A."/>
            <person name="Minor W."/>
            <person name="Anderson W.F."/>
        </authorList>
    </citation>
    <scope>FUNCTION</scope>
    <scope>SUBSTRATE SPECIFICITY</scope>
    <source>
        <strain>ATCC 15692 / DSM 22644 / CIP 104116 / JCM 14847 / LMG 12228 / 1C / PRS 101 / PAO1</strain>
    </source>
</reference>
<feature type="chain" id="PRO_0000433349" description="Acetyltransferase PA3944">
    <location>
        <begin position="1"/>
        <end position="192"/>
    </location>
</feature>
<feature type="domain" description="N-acetyltransferase" evidence="2">
    <location>
        <begin position="18"/>
        <end position="187"/>
    </location>
</feature>
<feature type="binding site" evidence="1">
    <location>
        <begin position="105"/>
        <end position="107"/>
    </location>
    <ligand>
        <name>CoA</name>
        <dbReference type="ChEBI" id="CHEBI:57287"/>
    </ligand>
</feature>
<feature type="binding site" evidence="1">
    <location>
        <position position="113"/>
    </location>
    <ligand>
        <name>CoA</name>
        <dbReference type="ChEBI" id="CHEBI:57287"/>
    </ligand>
</feature>
<feature type="binding site" evidence="1">
    <location>
        <position position="145"/>
    </location>
    <ligand>
        <name>CoA</name>
        <dbReference type="ChEBI" id="CHEBI:57287"/>
    </ligand>
</feature>
<feature type="binding site" evidence="1">
    <location>
        <begin position="150"/>
        <end position="152"/>
    </location>
    <ligand>
        <name>CoA</name>
        <dbReference type="ChEBI" id="CHEBI:57287"/>
    </ligand>
</feature>
<feature type="turn" evidence="6">
    <location>
        <begin position="1"/>
        <end position="4"/>
    </location>
</feature>
<feature type="strand" evidence="5">
    <location>
        <begin position="19"/>
        <end position="21"/>
    </location>
</feature>
<feature type="helix" evidence="5">
    <location>
        <begin position="25"/>
        <end position="27"/>
    </location>
</feature>
<feature type="helix" evidence="5">
    <location>
        <begin position="28"/>
        <end position="35"/>
    </location>
</feature>
<feature type="turn" evidence="5">
    <location>
        <begin position="38"/>
        <end position="40"/>
    </location>
</feature>
<feature type="strand" evidence="7">
    <location>
        <begin position="44"/>
        <end position="46"/>
    </location>
</feature>
<feature type="helix" evidence="5">
    <location>
        <begin position="50"/>
        <end position="67"/>
    </location>
</feature>
<feature type="strand" evidence="5">
    <location>
        <begin position="71"/>
        <end position="76"/>
    </location>
</feature>
<feature type="turn" evidence="5">
    <location>
        <begin position="77"/>
        <end position="79"/>
    </location>
</feature>
<feature type="strand" evidence="5">
    <location>
        <begin position="84"/>
        <end position="91"/>
    </location>
</feature>
<feature type="strand" evidence="5">
    <location>
        <begin position="93"/>
        <end position="95"/>
    </location>
</feature>
<feature type="strand" evidence="5">
    <location>
        <begin position="99"/>
        <end position="107"/>
    </location>
</feature>
<feature type="helix" evidence="5">
    <location>
        <begin position="109"/>
        <end position="111"/>
    </location>
</feature>
<feature type="helix" evidence="5">
    <location>
        <begin position="116"/>
        <end position="130"/>
    </location>
</feature>
<feature type="strand" evidence="5">
    <location>
        <begin position="135"/>
        <end position="141"/>
    </location>
</feature>
<feature type="helix" evidence="5">
    <location>
        <begin position="146"/>
        <end position="154"/>
    </location>
</feature>
<feature type="helix" evidence="5">
    <location>
        <begin position="161"/>
        <end position="163"/>
    </location>
</feature>
<feature type="strand" evidence="5">
    <location>
        <begin position="178"/>
        <end position="185"/>
    </location>
</feature>
<feature type="helix" evidence="5">
    <location>
        <begin position="186"/>
        <end position="190"/>
    </location>
</feature>
<dbReference type="EC" id="2.3.1.-"/>
<dbReference type="EMBL" id="AE004091">
    <property type="protein sequence ID" value="AAG07331.1"/>
    <property type="molecule type" value="Genomic_DNA"/>
</dbReference>
<dbReference type="PIR" id="D83153">
    <property type="entry name" value="D83153"/>
</dbReference>
<dbReference type="RefSeq" id="NP_252633.1">
    <property type="nucleotide sequence ID" value="NC_002516.2"/>
</dbReference>
<dbReference type="RefSeq" id="WP_003106018.1">
    <property type="nucleotide sequence ID" value="NZ_QZGE01000001.1"/>
</dbReference>
<dbReference type="PDB" id="6EDD">
    <property type="method" value="X-ray"/>
    <property type="resolution" value="1.55 A"/>
    <property type="chains" value="A/B=1-192"/>
</dbReference>
<dbReference type="PDB" id="6EDV">
    <property type="method" value="X-ray"/>
    <property type="resolution" value="1.35 A"/>
    <property type="chains" value="A=1-192"/>
</dbReference>
<dbReference type="PDB" id="7KPP">
    <property type="method" value="X-ray"/>
    <property type="resolution" value="1.45 A"/>
    <property type="chains" value="A/B=1-192"/>
</dbReference>
<dbReference type="PDB" id="7KPS">
    <property type="method" value="X-ray"/>
    <property type="resolution" value="1.80 A"/>
    <property type="chains" value="A/B=1-192"/>
</dbReference>
<dbReference type="PDB" id="7KYE">
    <property type="method" value="X-ray"/>
    <property type="resolution" value="1.93 A"/>
    <property type="chains" value="A=1-192"/>
</dbReference>
<dbReference type="PDB" id="7KYJ">
    <property type="method" value="X-ray"/>
    <property type="resolution" value="2.00 A"/>
    <property type="chains" value="A/B=1-192"/>
</dbReference>
<dbReference type="PDBsum" id="6EDD"/>
<dbReference type="PDBsum" id="6EDV"/>
<dbReference type="PDBsum" id="7KPP"/>
<dbReference type="PDBsum" id="7KPS"/>
<dbReference type="PDBsum" id="7KYE"/>
<dbReference type="PDBsum" id="7KYJ"/>
<dbReference type="SMR" id="Q9HX72"/>
<dbReference type="STRING" id="208964.PA3944"/>
<dbReference type="PaxDb" id="208964-PA3944"/>
<dbReference type="DNASU" id="878785"/>
<dbReference type="GeneID" id="878785"/>
<dbReference type="KEGG" id="pae:PA3944"/>
<dbReference type="PATRIC" id="fig|208964.12.peg.4133"/>
<dbReference type="PseudoCAP" id="PA3944"/>
<dbReference type="HOGENOM" id="CLU_013985_3_1_6"/>
<dbReference type="InParanoid" id="Q9HX72"/>
<dbReference type="OrthoDB" id="9801656at2"/>
<dbReference type="PhylomeDB" id="Q9HX72"/>
<dbReference type="BioCyc" id="PAER208964:G1FZ6-4017-MONOMER"/>
<dbReference type="Proteomes" id="UP000002438">
    <property type="component" value="Chromosome"/>
</dbReference>
<dbReference type="GO" id="GO:0016747">
    <property type="term" value="F:acyltransferase activity, transferring groups other than amino-acyl groups"/>
    <property type="evidence" value="ECO:0000314"/>
    <property type="project" value="UniProtKB"/>
</dbReference>
<dbReference type="Gene3D" id="3.40.630.30">
    <property type="match status" value="1"/>
</dbReference>
<dbReference type="InterPro" id="IPR016181">
    <property type="entry name" value="Acyl_CoA_acyltransferase"/>
</dbReference>
<dbReference type="InterPro" id="IPR000182">
    <property type="entry name" value="GNAT_dom"/>
</dbReference>
<dbReference type="InterPro" id="IPR051531">
    <property type="entry name" value="N-acetyltransferase"/>
</dbReference>
<dbReference type="PANTHER" id="PTHR43792">
    <property type="entry name" value="GNAT FAMILY, PUTATIVE (AFU_ORTHOLOGUE AFUA_3G00765)-RELATED-RELATED"/>
    <property type="match status" value="1"/>
</dbReference>
<dbReference type="PANTHER" id="PTHR43792:SF1">
    <property type="entry name" value="N-ACETYLTRANSFERASE DOMAIN-CONTAINING PROTEIN"/>
    <property type="match status" value="1"/>
</dbReference>
<dbReference type="Pfam" id="PF13302">
    <property type="entry name" value="Acetyltransf_3"/>
    <property type="match status" value="1"/>
</dbReference>
<dbReference type="SUPFAM" id="SSF55729">
    <property type="entry name" value="Acyl-CoA N-acyltransferases (Nat)"/>
    <property type="match status" value="1"/>
</dbReference>
<dbReference type="PROSITE" id="PS51186">
    <property type="entry name" value="GNAT"/>
    <property type="match status" value="1"/>
</dbReference>
<gene>
    <name type="ordered locus">PA3944</name>
</gene>
<sequence length="192" mass="21857">MNANLPPSAISELHGPRLLLRAWRDSDREAFAEMCADPQVMEFFPSVLDRAQSDALVDRVQAHFAERGYGPWALELPGEAAFIGFTGLFDVTMDVHFAPTVEIGWRLAPAYWGRGLAREAAETALDFAFERLRLPEVVAFTTPPNRRSWGLMERLGMRRDPAEDFDHPLLAADHPMRRHILYRVDAARWAER</sequence>
<accession>Q9HX72</accession>